<dbReference type="EMBL" id="AL590446">
    <property type="protein sequence ID" value="CAD25410.1"/>
    <property type="molecule type" value="Genomic_DNA"/>
</dbReference>
<dbReference type="EMBL" id="BK001346">
    <property type="protein sequence ID" value="DAA01309.1"/>
    <property type="molecule type" value="Genomic_DNA"/>
</dbReference>
<dbReference type="RefSeq" id="NP_585806.1">
    <property type="nucleotide sequence ID" value="NM_001041428.1"/>
</dbReference>
<dbReference type="SMR" id="Q8SVD3"/>
<dbReference type="STRING" id="284813.Q8SVD3"/>
<dbReference type="GeneID" id="859230"/>
<dbReference type="KEGG" id="ecu:ECU06_0500"/>
<dbReference type="VEuPathDB" id="MicrosporidiaDB:ECU06_0500"/>
<dbReference type="HOGENOM" id="CLU_173461_0_0_1"/>
<dbReference type="InParanoid" id="Q8SVD3"/>
<dbReference type="OrthoDB" id="6159439at2759"/>
<dbReference type="Proteomes" id="UP000000819">
    <property type="component" value="Chromosome VI"/>
</dbReference>
<dbReference type="GO" id="GO:0005634">
    <property type="term" value="C:nucleus"/>
    <property type="evidence" value="ECO:0007669"/>
    <property type="project" value="UniProtKB-SubCell"/>
</dbReference>
<dbReference type="GO" id="GO:0000981">
    <property type="term" value="F:DNA-binding transcription factor activity, RNA polymerase II-specific"/>
    <property type="evidence" value="ECO:0007669"/>
    <property type="project" value="InterPro"/>
</dbReference>
<dbReference type="GO" id="GO:0000978">
    <property type="term" value="F:RNA polymerase II cis-regulatory region sequence-specific DNA binding"/>
    <property type="evidence" value="ECO:0007669"/>
    <property type="project" value="TreeGrafter"/>
</dbReference>
<dbReference type="GO" id="GO:0030154">
    <property type="term" value="P:cell differentiation"/>
    <property type="evidence" value="ECO:0007669"/>
    <property type="project" value="TreeGrafter"/>
</dbReference>
<dbReference type="CDD" id="cd00086">
    <property type="entry name" value="homeodomain"/>
    <property type="match status" value="1"/>
</dbReference>
<dbReference type="Gene3D" id="1.10.10.60">
    <property type="entry name" value="Homeodomain-like"/>
    <property type="match status" value="1"/>
</dbReference>
<dbReference type="InterPro" id="IPR001356">
    <property type="entry name" value="HD"/>
</dbReference>
<dbReference type="InterPro" id="IPR017970">
    <property type="entry name" value="Homeobox_CS"/>
</dbReference>
<dbReference type="InterPro" id="IPR051000">
    <property type="entry name" value="Homeobox_DNA-bind_prot"/>
</dbReference>
<dbReference type="InterPro" id="IPR009057">
    <property type="entry name" value="Homeodomain-like_sf"/>
</dbReference>
<dbReference type="PANTHER" id="PTHR24324:SF9">
    <property type="entry name" value="HOMEOBOX DOMAIN-CONTAINING PROTEIN"/>
    <property type="match status" value="1"/>
</dbReference>
<dbReference type="PANTHER" id="PTHR24324">
    <property type="entry name" value="HOMEOBOX PROTEIN HHEX"/>
    <property type="match status" value="1"/>
</dbReference>
<dbReference type="Pfam" id="PF00046">
    <property type="entry name" value="Homeodomain"/>
    <property type="match status" value="1"/>
</dbReference>
<dbReference type="SMART" id="SM00389">
    <property type="entry name" value="HOX"/>
    <property type="match status" value="1"/>
</dbReference>
<dbReference type="SUPFAM" id="SSF46689">
    <property type="entry name" value="Homeodomain-like"/>
    <property type="match status" value="1"/>
</dbReference>
<dbReference type="PROSITE" id="PS00027">
    <property type="entry name" value="HOMEOBOX_1"/>
    <property type="match status" value="1"/>
</dbReference>
<dbReference type="PROSITE" id="PS50071">
    <property type="entry name" value="HOMEOBOX_2"/>
    <property type="match status" value="1"/>
</dbReference>
<proteinExistence type="predicted"/>
<protein>
    <recommendedName>
        <fullName>Homeobox protein HD-3</fullName>
    </recommendedName>
    <alternativeName>
        <fullName>EcHD-3</fullName>
    </alternativeName>
</protein>
<accession>Q8SVD3</accession>
<accession>Q7SI83</accession>
<gene>
    <name type="primary">HD-3</name>
    <name type="ordered locus">ECU06_0500</name>
</gene>
<evidence type="ECO:0000255" key="1">
    <source>
        <dbReference type="PROSITE-ProRule" id="PRU00108"/>
    </source>
</evidence>
<feature type="chain" id="PRO_0000048912" description="Homeobox protein HD-3">
    <location>
        <begin position="1"/>
        <end position="107"/>
    </location>
</feature>
<feature type="DNA-binding region" description="Homeobox" evidence="1">
    <location>
        <begin position="6"/>
        <end position="65"/>
    </location>
</feature>
<keyword id="KW-0238">DNA-binding</keyword>
<keyword id="KW-0371">Homeobox</keyword>
<keyword id="KW-0539">Nucleus</keyword>
<keyword id="KW-1185">Reference proteome</keyword>
<reference key="1">
    <citation type="journal article" date="2001" name="Nature">
        <title>Genome sequence and gene compaction of the eukaryote parasite Encephalitozoon cuniculi.</title>
        <authorList>
            <person name="Katinka M.D."/>
            <person name="Duprat S."/>
            <person name="Cornillot E."/>
            <person name="Metenier G."/>
            <person name="Thomarat F."/>
            <person name="Prensier G."/>
            <person name="Barbe V."/>
            <person name="Peyretaillade E."/>
            <person name="Brottier P."/>
            <person name="Wincker P."/>
            <person name="Delbac F."/>
            <person name="El Alaoui H."/>
            <person name="Peyret P."/>
            <person name="Saurin W."/>
            <person name="Gouy M."/>
            <person name="Weissenbach J."/>
            <person name="Vivares C.P."/>
        </authorList>
    </citation>
    <scope>NUCLEOTIDE SEQUENCE [LARGE SCALE GENOMIC DNA]</scope>
    <source>
        <strain>GB-M1</strain>
    </source>
</reference>
<reference key="2">
    <citation type="journal article" date="2003" name="Dev. Genes Evol.">
        <title>The homeobox genes of Encephalitozoon cuniculi (Microsporidia) reveal a putative mating-type locus.</title>
        <authorList>
            <person name="Buerglin T.R."/>
        </authorList>
    </citation>
    <scope>DISCUSSION OF SEQUENCE</scope>
</reference>
<comment type="subcellular location">
    <subcellularLocation>
        <location>Nucleus</location>
    </subcellularLocation>
</comment>
<name>HD3_ENCCU</name>
<sequence length="107" mass="11927">MSRKESKAPRTRMTAGQTRVLMSFFKDNPFPSTTAREKLSKVLGVGPRTVQIWFQNQRQKARGQAKVSDREEGPRACTGSECLGKLCILACAAISRMEEEAAWNLGH</sequence>
<organism>
    <name type="scientific">Encephalitozoon cuniculi (strain GB-M1)</name>
    <name type="common">Microsporidian parasite</name>
    <dbReference type="NCBI Taxonomy" id="284813"/>
    <lineage>
        <taxon>Eukaryota</taxon>
        <taxon>Fungi</taxon>
        <taxon>Fungi incertae sedis</taxon>
        <taxon>Microsporidia</taxon>
        <taxon>Unikaryonidae</taxon>
        <taxon>Encephalitozoon</taxon>
    </lineage>
</organism>